<keyword id="KW-0067">ATP-binding</keyword>
<keyword id="KW-0963">Cytoplasm</keyword>
<keyword id="KW-0418">Kinase</keyword>
<keyword id="KW-0460">Magnesium</keyword>
<keyword id="KW-0479">Metal-binding</keyword>
<keyword id="KW-0547">Nucleotide-binding</keyword>
<keyword id="KW-0808">Transferase</keyword>
<dbReference type="EC" id="2.7.2.1" evidence="1"/>
<dbReference type="EMBL" id="BX571857">
    <property type="protein sequence ID" value="CAG43440.1"/>
    <property type="molecule type" value="Genomic_DNA"/>
</dbReference>
<dbReference type="RefSeq" id="WP_000040069.1">
    <property type="nucleotide sequence ID" value="NC_002953.3"/>
</dbReference>
<dbReference type="SMR" id="Q6G8L6"/>
<dbReference type="KEGG" id="sas:SAS1638"/>
<dbReference type="HOGENOM" id="CLU_020352_0_1_9"/>
<dbReference type="UniPathway" id="UPA00340">
    <property type="reaction ID" value="UER00458"/>
</dbReference>
<dbReference type="GO" id="GO:0005737">
    <property type="term" value="C:cytoplasm"/>
    <property type="evidence" value="ECO:0007669"/>
    <property type="project" value="UniProtKB-SubCell"/>
</dbReference>
<dbReference type="GO" id="GO:0008776">
    <property type="term" value="F:acetate kinase activity"/>
    <property type="evidence" value="ECO:0007669"/>
    <property type="project" value="UniProtKB-UniRule"/>
</dbReference>
<dbReference type="GO" id="GO:0005524">
    <property type="term" value="F:ATP binding"/>
    <property type="evidence" value="ECO:0007669"/>
    <property type="project" value="UniProtKB-KW"/>
</dbReference>
<dbReference type="GO" id="GO:0000287">
    <property type="term" value="F:magnesium ion binding"/>
    <property type="evidence" value="ECO:0007669"/>
    <property type="project" value="UniProtKB-UniRule"/>
</dbReference>
<dbReference type="GO" id="GO:0006083">
    <property type="term" value="P:acetate metabolic process"/>
    <property type="evidence" value="ECO:0007669"/>
    <property type="project" value="TreeGrafter"/>
</dbReference>
<dbReference type="GO" id="GO:0006085">
    <property type="term" value="P:acetyl-CoA biosynthetic process"/>
    <property type="evidence" value="ECO:0007669"/>
    <property type="project" value="UniProtKB-UniRule"/>
</dbReference>
<dbReference type="CDD" id="cd24010">
    <property type="entry name" value="ASKHA_NBD_AcK_PK"/>
    <property type="match status" value="1"/>
</dbReference>
<dbReference type="Gene3D" id="3.30.420.40">
    <property type="match status" value="2"/>
</dbReference>
<dbReference type="HAMAP" id="MF_00020">
    <property type="entry name" value="Acetate_kinase"/>
    <property type="match status" value="1"/>
</dbReference>
<dbReference type="InterPro" id="IPR004372">
    <property type="entry name" value="Ac/propionate_kinase"/>
</dbReference>
<dbReference type="InterPro" id="IPR000890">
    <property type="entry name" value="Aliphatic_acid_kin_short-chain"/>
</dbReference>
<dbReference type="InterPro" id="IPR023865">
    <property type="entry name" value="Aliphatic_acid_kinase_CS"/>
</dbReference>
<dbReference type="InterPro" id="IPR043129">
    <property type="entry name" value="ATPase_NBD"/>
</dbReference>
<dbReference type="NCBIfam" id="TIGR00016">
    <property type="entry name" value="ackA"/>
    <property type="match status" value="1"/>
</dbReference>
<dbReference type="PANTHER" id="PTHR21060">
    <property type="entry name" value="ACETATE KINASE"/>
    <property type="match status" value="1"/>
</dbReference>
<dbReference type="PANTHER" id="PTHR21060:SF15">
    <property type="entry name" value="ACETATE KINASE-RELATED"/>
    <property type="match status" value="1"/>
</dbReference>
<dbReference type="Pfam" id="PF00871">
    <property type="entry name" value="Acetate_kinase"/>
    <property type="match status" value="1"/>
</dbReference>
<dbReference type="PIRSF" id="PIRSF000722">
    <property type="entry name" value="Acetate_prop_kin"/>
    <property type="match status" value="1"/>
</dbReference>
<dbReference type="PRINTS" id="PR00471">
    <property type="entry name" value="ACETATEKNASE"/>
</dbReference>
<dbReference type="SUPFAM" id="SSF53067">
    <property type="entry name" value="Actin-like ATPase domain"/>
    <property type="match status" value="2"/>
</dbReference>
<dbReference type="PROSITE" id="PS01075">
    <property type="entry name" value="ACETATE_KINASE_1"/>
    <property type="match status" value="1"/>
</dbReference>
<dbReference type="PROSITE" id="PS01076">
    <property type="entry name" value="ACETATE_KINASE_2"/>
    <property type="match status" value="1"/>
</dbReference>
<comment type="function">
    <text evidence="1">Catalyzes the formation of acetyl phosphate from acetate and ATP. Can also catalyze the reverse reaction.</text>
</comment>
<comment type="catalytic activity">
    <reaction evidence="1">
        <text>acetate + ATP = acetyl phosphate + ADP</text>
        <dbReference type="Rhea" id="RHEA:11352"/>
        <dbReference type="ChEBI" id="CHEBI:22191"/>
        <dbReference type="ChEBI" id="CHEBI:30089"/>
        <dbReference type="ChEBI" id="CHEBI:30616"/>
        <dbReference type="ChEBI" id="CHEBI:456216"/>
        <dbReference type="EC" id="2.7.2.1"/>
    </reaction>
</comment>
<comment type="cofactor">
    <cofactor evidence="1">
        <name>Mg(2+)</name>
        <dbReference type="ChEBI" id="CHEBI:18420"/>
    </cofactor>
    <cofactor evidence="1">
        <name>Mn(2+)</name>
        <dbReference type="ChEBI" id="CHEBI:29035"/>
    </cofactor>
    <text evidence="1">Mg(2+). Can also accept Mn(2+).</text>
</comment>
<comment type="pathway">
    <text evidence="1">Metabolic intermediate biosynthesis; acetyl-CoA biosynthesis; acetyl-CoA from acetate: step 1/2.</text>
</comment>
<comment type="subunit">
    <text evidence="1">Homodimer.</text>
</comment>
<comment type="subcellular location">
    <subcellularLocation>
        <location evidence="1">Cytoplasm</location>
    </subcellularLocation>
</comment>
<comment type="similarity">
    <text evidence="1">Belongs to the acetokinase family.</text>
</comment>
<organism>
    <name type="scientific">Staphylococcus aureus (strain MSSA476)</name>
    <dbReference type="NCBI Taxonomy" id="282459"/>
    <lineage>
        <taxon>Bacteria</taxon>
        <taxon>Bacillati</taxon>
        <taxon>Bacillota</taxon>
        <taxon>Bacilli</taxon>
        <taxon>Bacillales</taxon>
        <taxon>Staphylococcaceae</taxon>
        <taxon>Staphylococcus</taxon>
    </lineage>
</organism>
<name>ACKA_STAAS</name>
<protein>
    <recommendedName>
        <fullName evidence="1">Acetate kinase</fullName>
        <ecNumber evidence="1">2.7.2.1</ecNumber>
    </recommendedName>
    <alternativeName>
        <fullName evidence="1">Acetokinase</fullName>
    </alternativeName>
</protein>
<gene>
    <name evidence="1" type="primary">ackA</name>
    <name type="ordered locus">SAS1638</name>
</gene>
<evidence type="ECO:0000255" key="1">
    <source>
        <dbReference type="HAMAP-Rule" id="MF_00020"/>
    </source>
</evidence>
<sequence>MSKLILAINAGSSSLKFQLIRMPEEELVTKGLVERIGLKDSIFTIEVNGEKVKTVQDIKDHVEAVDIMLDAFKAHNIINDINDIDGTGHRVVHGGEKFPESVAITDEVEKEIEELSELAPLHNPANLMGIRAFRKLLPNIPHVAIFDTAFHQTMPEKAYLYSLPYHYYKDYGIRKYGFHGTSHKFVSQRAAEMLDKPIEDLRIISCHIGNGASIAAIDGGKSIDTSMGFTPLAGVTMGTRSGNIDPALIPFIMEKTGKTAEQVLEILNKESGLLGLSGTSSDLRDLSEEAESGKARSQMALDVFASKIHKYIGSYAARMHGVDVIVFTAGIGENSVEIRAKVLEGLEFMGVYWDPKKNENLLRGKEGFINYPHSPVKVVVIPTDEESMIARDVMTFGGLK</sequence>
<feature type="chain" id="PRO_0000107614" description="Acetate kinase">
    <location>
        <begin position="1"/>
        <end position="400"/>
    </location>
</feature>
<feature type="active site" description="Proton donor/acceptor" evidence="1">
    <location>
        <position position="147"/>
    </location>
</feature>
<feature type="binding site" evidence="1">
    <location>
        <position position="9"/>
    </location>
    <ligand>
        <name>Mg(2+)</name>
        <dbReference type="ChEBI" id="CHEBI:18420"/>
    </ligand>
</feature>
<feature type="binding site" evidence="1">
    <location>
        <position position="16"/>
    </location>
    <ligand>
        <name>ATP</name>
        <dbReference type="ChEBI" id="CHEBI:30616"/>
    </ligand>
</feature>
<feature type="binding site" evidence="1">
    <location>
        <position position="90"/>
    </location>
    <ligand>
        <name>substrate</name>
    </ligand>
</feature>
<feature type="binding site" evidence="1">
    <location>
        <begin position="207"/>
        <end position="211"/>
    </location>
    <ligand>
        <name>ATP</name>
        <dbReference type="ChEBI" id="CHEBI:30616"/>
    </ligand>
</feature>
<feature type="binding site" evidence="1">
    <location>
        <begin position="282"/>
        <end position="284"/>
    </location>
    <ligand>
        <name>ATP</name>
        <dbReference type="ChEBI" id="CHEBI:30616"/>
    </ligand>
</feature>
<feature type="binding site" evidence="1">
    <location>
        <begin position="330"/>
        <end position="334"/>
    </location>
    <ligand>
        <name>ATP</name>
        <dbReference type="ChEBI" id="CHEBI:30616"/>
    </ligand>
</feature>
<feature type="binding site" evidence="1">
    <location>
        <position position="385"/>
    </location>
    <ligand>
        <name>Mg(2+)</name>
        <dbReference type="ChEBI" id="CHEBI:18420"/>
    </ligand>
</feature>
<feature type="site" description="Transition state stabilizer" evidence="1">
    <location>
        <position position="179"/>
    </location>
</feature>
<feature type="site" description="Transition state stabilizer" evidence="1">
    <location>
        <position position="240"/>
    </location>
</feature>
<proteinExistence type="inferred from homology"/>
<reference key="1">
    <citation type="journal article" date="2004" name="Proc. Natl. Acad. Sci. U.S.A.">
        <title>Complete genomes of two clinical Staphylococcus aureus strains: evidence for the rapid evolution of virulence and drug resistance.</title>
        <authorList>
            <person name="Holden M.T.G."/>
            <person name="Feil E.J."/>
            <person name="Lindsay J.A."/>
            <person name="Peacock S.J."/>
            <person name="Day N.P.J."/>
            <person name="Enright M.C."/>
            <person name="Foster T.J."/>
            <person name="Moore C.E."/>
            <person name="Hurst L."/>
            <person name="Atkin R."/>
            <person name="Barron A."/>
            <person name="Bason N."/>
            <person name="Bentley S.D."/>
            <person name="Chillingworth C."/>
            <person name="Chillingworth T."/>
            <person name="Churcher C."/>
            <person name="Clark L."/>
            <person name="Corton C."/>
            <person name="Cronin A."/>
            <person name="Doggett J."/>
            <person name="Dowd L."/>
            <person name="Feltwell T."/>
            <person name="Hance Z."/>
            <person name="Harris B."/>
            <person name="Hauser H."/>
            <person name="Holroyd S."/>
            <person name="Jagels K."/>
            <person name="James K.D."/>
            <person name="Lennard N."/>
            <person name="Line A."/>
            <person name="Mayes R."/>
            <person name="Moule S."/>
            <person name="Mungall K."/>
            <person name="Ormond D."/>
            <person name="Quail M.A."/>
            <person name="Rabbinowitsch E."/>
            <person name="Rutherford K.M."/>
            <person name="Sanders M."/>
            <person name="Sharp S."/>
            <person name="Simmonds M."/>
            <person name="Stevens K."/>
            <person name="Whitehead S."/>
            <person name="Barrell B.G."/>
            <person name="Spratt B.G."/>
            <person name="Parkhill J."/>
        </authorList>
    </citation>
    <scope>NUCLEOTIDE SEQUENCE [LARGE SCALE GENOMIC DNA]</scope>
    <source>
        <strain>MSSA476</strain>
    </source>
</reference>
<accession>Q6G8L6</accession>